<comment type="cofactor">
    <cofactor evidence="2">
        <name>Zn(2+)</name>
        <dbReference type="ChEBI" id="CHEBI:29105"/>
    </cofactor>
    <text evidence="2">Binds 1 zinc ion per subunit.</text>
</comment>
<comment type="subcellular location">
    <subcellularLocation>
        <location evidence="2">Cell inner membrane</location>
        <topology evidence="2">Multi-pass membrane protein</topology>
    </subcellularLocation>
</comment>
<comment type="similarity">
    <text evidence="2">Belongs to the peptidase M48B family.</text>
</comment>
<comment type="sequence caution" evidence="3">
    <conflict type="erroneous initiation">
        <sequence resource="EMBL-CDS" id="AAN42997"/>
    </conflict>
    <text>Truncated N-terminus.</text>
</comment>
<comment type="sequence caution" evidence="3">
    <conflict type="erroneous initiation">
        <sequence resource="EMBL-CDS" id="AAP16893"/>
    </conflict>
    <text>Truncated N-terminus.</text>
</comment>
<proteinExistence type="inferred from homology"/>
<protein>
    <recommendedName>
        <fullName evidence="2">Protease HtpX</fullName>
        <ecNumber evidence="2">3.4.24.-</ecNumber>
    </recommendedName>
    <alternativeName>
        <fullName evidence="2">Heat shock protein HtpX</fullName>
    </alternativeName>
</protein>
<keyword id="KW-0997">Cell inner membrane</keyword>
<keyword id="KW-1003">Cell membrane</keyword>
<keyword id="KW-0378">Hydrolase</keyword>
<keyword id="KW-0472">Membrane</keyword>
<keyword id="KW-0479">Metal-binding</keyword>
<keyword id="KW-0482">Metalloprotease</keyword>
<keyword id="KW-0645">Protease</keyword>
<keyword id="KW-1185">Reference proteome</keyword>
<keyword id="KW-0812">Transmembrane</keyword>
<keyword id="KW-1133">Transmembrane helix</keyword>
<keyword id="KW-0862">Zinc</keyword>
<organism>
    <name type="scientific">Shigella flexneri</name>
    <dbReference type="NCBI Taxonomy" id="623"/>
    <lineage>
        <taxon>Bacteria</taxon>
        <taxon>Pseudomonadati</taxon>
        <taxon>Pseudomonadota</taxon>
        <taxon>Gammaproteobacteria</taxon>
        <taxon>Enterobacterales</taxon>
        <taxon>Enterobacteriaceae</taxon>
        <taxon>Shigella</taxon>
    </lineage>
</organism>
<evidence type="ECO:0000255" key="1"/>
<evidence type="ECO:0000255" key="2">
    <source>
        <dbReference type="HAMAP-Rule" id="MF_00188"/>
    </source>
</evidence>
<evidence type="ECO:0000305" key="3"/>
<dbReference type="EC" id="3.4.24.-" evidence="2"/>
<dbReference type="EMBL" id="AE005674">
    <property type="protein sequence ID" value="AAN42997.2"/>
    <property type="status" value="ALT_INIT"/>
    <property type="molecule type" value="Genomic_DNA"/>
</dbReference>
<dbReference type="EMBL" id="AE014073">
    <property type="protein sequence ID" value="AAP16893.1"/>
    <property type="status" value="ALT_INIT"/>
    <property type="molecule type" value="Genomic_DNA"/>
</dbReference>
<dbReference type="RefSeq" id="NP_707290.2">
    <property type="nucleotide sequence ID" value="NC_004337.2"/>
</dbReference>
<dbReference type="RefSeq" id="WP_000984517.1">
    <property type="nucleotide sequence ID" value="NZ_WPGW01000080.1"/>
</dbReference>
<dbReference type="SMR" id="P65814"/>
<dbReference type="STRING" id="198214.SF1396"/>
<dbReference type="MEROPS" id="M48.002"/>
<dbReference type="PaxDb" id="198214-SF1396"/>
<dbReference type="GeneID" id="1024421"/>
<dbReference type="GeneID" id="93776079"/>
<dbReference type="KEGG" id="sfl:SF1396"/>
<dbReference type="KEGG" id="sfx:S1512"/>
<dbReference type="PATRIC" id="fig|198214.7.peg.1646"/>
<dbReference type="HOGENOM" id="CLU_042266_1_0_6"/>
<dbReference type="Proteomes" id="UP000001006">
    <property type="component" value="Chromosome"/>
</dbReference>
<dbReference type="Proteomes" id="UP000002673">
    <property type="component" value="Chromosome"/>
</dbReference>
<dbReference type="GO" id="GO:0005886">
    <property type="term" value="C:plasma membrane"/>
    <property type="evidence" value="ECO:0007669"/>
    <property type="project" value="UniProtKB-SubCell"/>
</dbReference>
<dbReference type="GO" id="GO:0004222">
    <property type="term" value="F:metalloendopeptidase activity"/>
    <property type="evidence" value="ECO:0007669"/>
    <property type="project" value="UniProtKB-UniRule"/>
</dbReference>
<dbReference type="GO" id="GO:0008270">
    <property type="term" value="F:zinc ion binding"/>
    <property type="evidence" value="ECO:0007669"/>
    <property type="project" value="UniProtKB-UniRule"/>
</dbReference>
<dbReference type="GO" id="GO:0006508">
    <property type="term" value="P:proteolysis"/>
    <property type="evidence" value="ECO:0007669"/>
    <property type="project" value="UniProtKB-KW"/>
</dbReference>
<dbReference type="CDD" id="cd07335">
    <property type="entry name" value="M48B_HtpX_like"/>
    <property type="match status" value="1"/>
</dbReference>
<dbReference type="FunFam" id="3.30.2010.10:FF:000001">
    <property type="entry name" value="Protease HtpX"/>
    <property type="match status" value="1"/>
</dbReference>
<dbReference type="Gene3D" id="3.30.2010.10">
    <property type="entry name" value="Metalloproteases ('zincins'), catalytic domain"/>
    <property type="match status" value="1"/>
</dbReference>
<dbReference type="HAMAP" id="MF_00188">
    <property type="entry name" value="Pept_M48_protease_HtpX"/>
    <property type="match status" value="1"/>
</dbReference>
<dbReference type="InterPro" id="IPR050083">
    <property type="entry name" value="HtpX_protease"/>
</dbReference>
<dbReference type="InterPro" id="IPR022919">
    <property type="entry name" value="Pept_M48_protease_HtpX"/>
</dbReference>
<dbReference type="InterPro" id="IPR001915">
    <property type="entry name" value="Peptidase_M48"/>
</dbReference>
<dbReference type="NCBIfam" id="NF003965">
    <property type="entry name" value="PRK05457.1"/>
    <property type="match status" value="1"/>
</dbReference>
<dbReference type="PANTHER" id="PTHR43221">
    <property type="entry name" value="PROTEASE HTPX"/>
    <property type="match status" value="1"/>
</dbReference>
<dbReference type="PANTHER" id="PTHR43221:SF1">
    <property type="entry name" value="PROTEASE HTPX"/>
    <property type="match status" value="1"/>
</dbReference>
<dbReference type="Pfam" id="PF01435">
    <property type="entry name" value="Peptidase_M48"/>
    <property type="match status" value="1"/>
</dbReference>
<gene>
    <name evidence="2" type="primary">htpX</name>
    <name type="ordered locus">SF1396</name>
    <name type="ordered locus">S1512</name>
</gene>
<accession>P65814</accession>
<accession>Q8XCN0</accession>
<name>HTPX_SHIFL</name>
<sequence length="293" mass="31957">MMRIALFLLTNLAVMVVFGLVLSLTGIQSSSVQGLMIMALLFGFGGSFVSLLMSKWMALRSVGGEVIEQPRNERERWLVNTVATQARQAGIAMPQVAIYHAPDINAFATGARRDASLVAVSTGLLQNMSPDEAEAVIAHEISHIANGDMVTMTLIQGVVNTFVIFISRILAQLAAGFMGGNRDEGEESNGNPLIYFAVATVLELVFGILASIITMWFSRHREFHADAGSAKLVGREKMIAALQRLKTSYEPQEATSMMAFCINGKSKSLSELFMTHPPLDKRIEALRTGEYLK</sequence>
<reference key="1">
    <citation type="journal article" date="2002" name="Nucleic Acids Res.">
        <title>Genome sequence of Shigella flexneri 2a: insights into pathogenicity through comparison with genomes of Escherichia coli K12 and O157.</title>
        <authorList>
            <person name="Jin Q."/>
            <person name="Yuan Z."/>
            <person name="Xu J."/>
            <person name="Wang Y."/>
            <person name="Shen Y."/>
            <person name="Lu W."/>
            <person name="Wang J."/>
            <person name="Liu H."/>
            <person name="Yang J."/>
            <person name="Yang F."/>
            <person name="Zhang X."/>
            <person name="Zhang J."/>
            <person name="Yang G."/>
            <person name="Wu H."/>
            <person name="Qu D."/>
            <person name="Dong J."/>
            <person name="Sun L."/>
            <person name="Xue Y."/>
            <person name="Zhao A."/>
            <person name="Gao Y."/>
            <person name="Zhu J."/>
            <person name="Kan B."/>
            <person name="Ding K."/>
            <person name="Chen S."/>
            <person name="Cheng H."/>
            <person name="Yao Z."/>
            <person name="He B."/>
            <person name="Chen R."/>
            <person name="Ma D."/>
            <person name="Qiang B."/>
            <person name="Wen Y."/>
            <person name="Hou Y."/>
            <person name="Yu J."/>
        </authorList>
    </citation>
    <scope>NUCLEOTIDE SEQUENCE [LARGE SCALE GENOMIC DNA]</scope>
    <source>
        <strain>301 / Serotype 2a</strain>
    </source>
</reference>
<reference key="2">
    <citation type="journal article" date="2003" name="Infect. Immun.">
        <title>Complete genome sequence and comparative genomics of Shigella flexneri serotype 2a strain 2457T.</title>
        <authorList>
            <person name="Wei J."/>
            <person name="Goldberg M.B."/>
            <person name="Burland V."/>
            <person name="Venkatesan M.M."/>
            <person name="Deng W."/>
            <person name="Fournier G."/>
            <person name="Mayhew G.F."/>
            <person name="Plunkett G. III"/>
            <person name="Rose D.J."/>
            <person name="Darling A."/>
            <person name="Mau B."/>
            <person name="Perna N.T."/>
            <person name="Payne S.M."/>
            <person name="Runyen-Janecky L.J."/>
            <person name="Zhou S."/>
            <person name="Schwartz D.C."/>
            <person name="Blattner F.R."/>
        </authorList>
    </citation>
    <scope>NUCLEOTIDE SEQUENCE [LARGE SCALE GENOMIC DNA]</scope>
    <source>
        <strain>ATCC 700930 / 2457T / Serotype 2a</strain>
    </source>
</reference>
<feature type="chain" id="PRO_0000138889" description="Protease HtpX">
    <location>
        <begin position="1"/>
        <end position="293"/>
    </location>
</feature>
<feature type="topological domain" description="Cytoplasmic" evidence="1">
    <location>
        <begin position="1"/>
        <end position="3"/>
    </location>
</feature>
<feature type="transmembrane region" description="Helical" evidence="2">
    <location>
        <begin position="4"/>
        <end position="24"/>
    </location>
</feature>
<feature type="topological domain" description="Periplasmic" evidence="1">
    <location>
        <begin position="25"/>
        <end position="33"/>
    </location>
</feature>
<feature type="transmembrane region" description="Helical" evidence="2">
    <location>
        <begin position="34"/>
        <end position="54"/>
    </location>
</feature>
<feature type="topological domain" description="Cytoplasmic" evidence="1">
    <location>
        <begin position="55"/>
        <end position="157"/>
    </location>
</feature>
<feature type="transmembrane region" description="Helical" evidence="2">
    <location>
        <begin position="158"/>
        <end position="178"/>
    </location>
</feature>
<feature type="topological domain" description="Periplasmic" evidence="1">
    <location>
        <begin position="179"/>
        <end position="192"/>
    </location>
</feature>
<feature type="transmembrane region" description="Helical" evidence="2">
    <location>
        <begin position="193"/>
        <end position="213"/>
    </location>
</feature>
<feature type="topological domain" description="Cytoplasmic" evidence="1">
    <location>
        <begin position="214"/>
        <end position="293"/>
    </location>
</feature>
<feature type="active site" evidence="2">
    <location>
        <position position="140"/>
    </location>
</feature>
<feature type="binding site" evidence="2">
    <location>
        <position position="139"/>
    </location>
    <ligand>
        <name>Zn(2+)</name>
        <dbReference type="ChEBI" id="CHEBI:29105"/>
        <note>catalytic</note>
    </ligand>
</feature>
<feature type="binding site" evidence="2">
    <location>
        <position position="143"/>
    </location>
    <ligand>
        <name>Zn(2+)</name>
        <dbReference type="ChEBI" id="CHEBI:29105"/>
        <note>catalytic</note>
    </ligand>
</feature>
<feature type="binding site" evidence="2">
    <location>
        <position position="222"/>
    </location>
    <ligand>
        <name>Zn(2+)</name>
        <dbReference type="ChEBI" id="CHEBI:29105"/>
        <note>catalytic</note>
    </ligand>
</feature>